<feature type="chain" id="PRO_1000138011" description="N-succinylarginine dihydrolase">
    <location>
        <begin position="1"/>
        <end position="447"/>
    </location>
</feature>
<feature type="active site" evidence="1">
    <location>
        <position position="174"/>
    </location>
</feature>
<feature type="active site" evidence="1">
    <location>
        <position position="248"/>
    </location>
</feature>
<feature type="active site" description="Nucleophile" evidence="1">
    <location>
        <position position="365"/>
    </location>
</feature>
<feature type="binding site" evidence="1">
    <location>
        <begin position="19"/>
        <end position="28"/>
    </location>
    <ligand>
        <name>substrate</name>
    </ligand>
</feature>
<feature type="binding site" evidence="1">
    <location>
        <position position="110"/>
    </location>
    <ligand>
        <name>substrate</name>
    </ligand>
</feature>
<feature type="binding site" evidence="1">
    <location>
        <begin position="137"/>
        <end position="138"/>
    </location>
    <ligand>
        <name>substrate</name>
    </ligand>
</feature>
<feature type="binding site" evidence="1">
    <location>
        <position position="212"/>
    </location>
    <ligand>
        <name>substrate</name>
    </ligand>
</feature>
<feature type="binding site" evidence="1">
    <location>
        <position position="250"/>
    </location>
    <ligand>
        <name>substrate</name>
    </ligand>
</feature>
<feature type="binding site" evidence="1">
    <location>
        <position position="359"/>
    </location>
    <ligand>
        <name>substrate</name>
    </ligand>
</feature>
<comment type="function">
    <text evidence="1">Catalyzes the hydrolysis of N(2)-succinylarginine into N(2)-succinylornithine, ammonia and CO(2).</text>
</comment>
<comment type="catalytic activity">
    <reaction evidence="1">
        <text>N(2)-succinyl-L-arginine + 2 H2O + 2 H(+) = N(2)-succinyl-L-ornithine + 2 NH4(+) + CO2</text>
        <dbReference type="Rhea" id="RHEA:19533"/>
        <dbReference type="ChEBI" id="CHEBI:15377"/>
        <dbReference type="ChEBI" id="CHEBI:15378"/>
        <dbReference type="ChEBI" id="CHEBI:16526"/>
        <dbReference type="ChEBI" id="CHEBI:28938"/>
        <dbReference type="ChEBI" id="CHEBI:58241"/>
        <dbReference type="ChEBI" id="CHEBI:58514"/>
        <dbReference type="EC" id="3.5.3.23"/>
    </reaction>
</comment>
<comment type="pathway">
    <text evidence="1">Amino-acid degradation; L-arginine degradation via AST pathway; L-glutamate and succinate from L-arginine: step 2/5.</text>
</comment>
<comment type="subunit">
    <text evidence="1">Homodimer.</text>
</comment>
<comment type="similarity">
    <text evidence="1">Belongs to the succinylarginine dihydrolase family.</text>
</comment>
<keyword id="KW-0056">Arginine metabolism</keyword>
<keyword id="KW-0378">Hydrolase</keyword>
<evidence type="ECO:0000255" key="1">
    <source>
        <dbReference type="HAMAP-Rule" id="MF_01172"/>
    </source>
</evidence>
<organism>
    <name type="scientific">Escherichia coli O7:K1 (strain IAI39 / ExPEC)</name>
    <dbReference type="NCBI Taxonomy" id="585057"/>
    <lineage>
        <taxon>Bacteria</taxon>
        <taxon>Pseudomonadati</taxon>
        <taxon>Pseudomonadota</taxon>
        <taxon>Gammaproteobacteria</taxon>
        <taxon>Enterobacterales</taxon>
        <taxon>Enterobacteriaceae</taxon>
        <taxon>Escherichia</taxon>
    </lineage>
</organism>
<accession>B7NT32</accession>
<reference key="1">
    <citation type="journal article" date="2009" name="PLoS Genet.">
        <title>Organised genome dynamics in the Escherichia coli species results in highly diverse adaptive paths.</title>
        <authorList>
            <person name="Touchon M."/>
            <person name="Hoede C."/>
            <person name="Tenaillon O."/>
            <person name="Barbe V."/>
            <person name="Baeriswyl S."/>
            <person name="Bidet P."/>
            <person name="Bingen E."/>
            <person name="Bonacorsi S."/>
            <person name="Bouchier C."/>
            <person name="Bouvet O."/>
            <person name="Calteau A."/>
            <person name="Chiapello H."/>
            <person name="Clermont O."/>
            <person name="Cruveiller S."/>
            <person name="Danchin A."/>
            <person name="Diard M."/>
            <person name="Dossat C."/>
            <person name="Karoui M.E."/>
            <person name="Frapy E."/>
            <person name="Garry L."/>
            <person name="Ghigo J.M."/>
            <person name="Gilles A.M."/>
            <person name="Johnson J."/>
            <person name="Le Bouguenec C."/>
            <person name="Lescat M."/>
            <person name="Mangenot S."/>
            <person name="Martinez-Jehanne V."/>
            <person name="Matic I."/>
            <person name="Nassif X."/>
            <person name="Oztas S."/>
            <person name="Petit M.A."/>
            <person name="Pichon C."/>
            <person name="Rouy Z."/>
            <person name="Ruf C.S."/>
            <person name="Schneider D."/>
            <person name="Tourret J."/>
            <person name="Vacherie B."/>
            <person name="Vallenet D."/>
            <person name="Medigue C."/>
            <person name="Rocha E.P.C."/>
            <person name="Denamur E."/>
        </authorList>
    </citation>
    <scope>NUCLEOTIDE SEQUENCE [LARGE SCALE GENOMIC DNA]</scope>
    <source>
        <strain>IAI39 / ExPEC</strain>
    </source>
</reference>
<gene>
    <name evidence="1" type="primary">astB</name>
    <name type="ordered locus">ECIAI39_1309</name>
</gene>
<proteinExistence type="inferred from homology"/>
<protein>
    <recommendedName>
        <fullName evidence="1">N-succinylarginine dihydrolase</fullName>
        <ecNumber evidence="1">3.5.3.23</ecNumber>
    </recommendedName>
</protein>
<name>ASTB_ECO7I</name>
<sequence length="447" mass="49291">MNAWEVNFDGLVGLTHHYAGLSFGNEASTRHRFQSSNPRLAAKQGLLKMKNLADAGFPQAVIPPHERPFIPVLRQLGFSGSDEHVLEKVARQAPHWLSSVSSASPMWVANAATIAPSADTLDGKVHLTVANLNNKFHRSLEAPVTESLLKAIFDDEEKFSVHSALPQVALLGDEGAANHNRLGGHYGEPGMQLFVYGREEGNDTRPSRYPARQTREASEAVARLNQVNPQQVIFAQQNPDVIDQGVFHNDVIAVSNRQVLFCHQQAFARQSQLLASLRARVNGFMAIEVPATHVSVSDAVSTYLFNSQLLSRDDGSMMLVLPQECREHAGVWGYLNELLAADNPISELKVFDLRESMANGGGPACLRLRVVLTEEERRAVNPAVMMNDTLFNALNDWVDRYYRDRLTAADLADPQLLREGREALDVLSQLLNLGSVYPFQREGGGNG</sequence>
<dbReference type="EC" id="3.5.3.23" evidence="1"/>
<dbReference type="EMBL" id="CU928164">
    <property type="protein sequence ID" value="CAR17443.1"/>
    <property type="molecule type" value="Genomic_DNA"/>
</dbReference>
<dbReference type="RefSeq" id="WP_000994962.1">
    <property type="nucleotide sequence ID" value="NC_011750.1"/>
</dbReference>
<dbReference type="RefSeq" id="YP_002407317.1">
    <property type="nucleotide sequence ID" value="NC_011750.1"/>
</dbReference>
<dbReference type="SMR" id="B7NT32"/>
<dbReference type="STRING" id="585057.ECIAI39_1309"/>
<dbReference type="KEGG" id="ect:ECIAI39_1309"/>
<dbReference type="PATRIC" id="fig|585057.6.peg.1371"/>
<dbReference type="HOGENOM" id="CLU_053835_0_0_6"/>
<dbReference type="UniPathway" id="UPA00185">
    <property type="reaction ID" value="UER00280"/>
</dbReference>
<dbReference type="Proteomes" id="UP000000749">
    <property type="component" value="Chromosome"/>
</dbReference>
<dbReference type="GO" id="GO:0009015">
    <property type="term" value="F:N-succinylarginine dihydrolase activity"/>
    <property type="evidence" value="ECO:0007669"/>
    <property type="project" value="UniProtKB-UniRule"/>
</dbReference>
<dbReference type="GO" id="GO:0019544">
    <property type="term" value="P:arginine catabolic process to glutamate"/>
    <property type="evidence" value="ECO:0007669"/>
    <property type="project" value="UniProtKB-UniRule"/>
</dbReference>
<dbReference type="GO" id="GO:0019545">
    <property type="term" value="P:arginine catabolic process to succinate"/>
    <property type="evidence" value="ECO:0007669"/>
    <property type="project" value="UniProtKB-UniRule"/>
</dbReference>
<dbReference type="FunFam" id="3.75.10.20:FF:000001">
    <property type="entry name" value="N-succinylarginine dihydrolase"/>
    <property type="match status" value="1"/>
</dbReference>
<dbReference type="Gene3D" id="3.75.10.20">
    <property type="entry name" value="Succinylarginine dihydrolase"/>
    <property type="match status" value="1"/>
</dbReference>
<dbReference type="HAMAP" id="MF_01172">
    <property type="entry name" value="AstB"/>
    <property type="match status" value="1"/>
</dbReference>
<dbReference type="InterPro" id="IPR037031">
    <property type="entry name" value="AstB_sf"/>
</dbReference>
<dbReference type="InterPro" id="IPR007079">
    <property type="entry name" value="SuccinylArg_d-Hdrlase_AstB"/>
</dbReference>
<dbReference type="NCBIfam" id="TIGR03241">
    <property type="entry name" value="arg_catab_astB"/>
    <property type="match status" value="1"/>
</dbReference>
<dbReference type="NCBIfam" id="NF009789">
    <property type="entry name" value="PRK13281.1"/>
    <property type="match status" value="1"/>
</dbReference>
<dbReference type="PANTHER" id="PTHR30420">
    <property type="entry name" value="N-SUCCINYLARGININE DIHYDROLASE"/>
    <property type="match status" value="1"/>
</dbReference>
<dbReference type="PANTHER" id="PTHR30420:SF2">
    <property type="entry name" value="N-SUCCINYLARGININE DIHYDROLASE"/>
    <property type="match status" value="1"/>
</dbReference>
<dbReference type="Pfam" id="PF04996">
    <property type="entry name" value="AstB"/>
    <property type="match status" value="1"/>
</dbReference>
<dbReference type="SUPFAM" id="SSF55909">
    <property type="entry name" value="Pentein"/>
    <property type="match status" value="1"/>
</dbReference>